<organism>
    <name type="scientific">Arabidopsis thaliana</name>
    <name type="common">Mouse-ear cress</name>
    <dbReference type="NCBI Taxonomy" id="3702"/>
    <lineage>
        <taxon>Eukaryota</taxon>
        <taxon>Viridiplantae</taxon>
        <taxon>Streptophyta</taxon>
        <taxon>Embryophyta</taxon>
        <taxon>Tracheophyta</taxon>
        <taxon>Spermatophyta</taxon>
        <taxon>Magnoliopsida</taxon>
        <taxon>eudicotyledons</taxon>
        <taxon>Gunneridae</taxon>
        <taxon>Pentapetalae</taxon>
        <taxon>rosids</taxon>
        <taxon>malvids</taxon>
        <taxon>Brassicales</taxon>
        <taxon>Brassicaceae</taxon>
        <taxon>Camelineae</taxon>
        <taxon>Arabidopsis</taxon>
    </lineage>
</organism>
<feature type="chain" id="PRO_0000393247" description="Probable methyltransferase PMT7">
    <location>
        <begin position="1"/>
        <end position="600"/>
    </location>
</feature>
<feature type="topological domain" description="Cytoplasmic" evidence="1">
    <location>
        <begin position="1"/>
        <end position="15"/>
    </location>
</feature>
<feature type="transmembrane region" description="Helical; Signal-anchor for type II membrane protein" evidence="1">
    <location>
        <begin position="16"/>
        <end position="36"/>
    </location>
</feature>
<feature type="topological domain" description="Lumenal" evidence="1">
    <location>
        <begin position="37"/>
        <end position="600"/>
    </location>
</feature>
<feature type="glycosylation site" description="N-linked (GlcNAc...) asparagine" evidence="1">
    <location>
        <position position="49"/>
    </location>
</feature>
<feature type="glycosylation site" description="N-linked (GlcNAc...) asparagine" evidence="1">
    <location>
        <position position="98"/>
    </location>
</feature>
<feature type="glycosylation site" description="N-linked (GlcNAc...) asparagine" evidence="1">
    <location>
        <position position="110"/>
    </location>
</feature>
<feature type="glycosylation site" description="N-linked (GlcNAc...) asparagine" evidence="1">
    <location>
        <position position="157"/>
    </location>
</feature>
<feature type="glycosylation site" description="N-linked (GlcNAc...) asparagine" evidence="1">
    <location>
        <position position="200"/>
    </location>
</feature>
<feature type="glycosylation site" description="N-linked (GlcNAc...) asparagine" evidence="1">
    <location>
        <position position="204"/>
    </location>
</feature>
<feature type="glycosylation site" description="N-linked (GlcNAc...) asparagine" evidence="1">
    <location>
        <position position="334"/>
    </location>
</feature>
<feature type="glycosylation site" description="N-linked (GlcNAc...) asparagine" evidence="1">
    <location>
        <position position="447"/>
    </location>
</feature>
<feature type="glycosylation site" description="N-linked (GlcNAc...) asparagine" evidence="1">
    <location>
        <position position="484"/>
    </location>
</feature>
<accession>Q9LZA4</accession>
<reference key="1">
    <citation type="journal article" date="2000" name="Nature">
        <title>Sequence and analysis of chromosome 5 of the plant Arabidopsis thaliana.</title>
        <authorList>
            <person name="Tabata S."/>
            <person name="Kaneko T."/>
            <person name="Nakamura Y."/>
            <person name="Kotani H."/>
            <person name="Kato T."/>
            <person name="Asamizu E."/>
            <person name="Miyajima N."/>
            <person name="Sasamoto S."/>
            <person name="Kimura T."/>
            <person name="Hosouchi T."/>
            <person name="Kawashima K."/>
            <person name="Kohara M."/>
            <person name="Matsumoto M."/>
            <person name="Matsuno A."/>
            <person name="Muraki A."/>
            <person name="Nakayama S."/>
            <person name="Nakazaki N."/>
            <person name="Naruo K."/>
            <person name="Okumura S."/>
            <person name="Shinpo S."/>
            <person name="Takeuchi C."/>
            <person name="Wada T."/>
            <person name="Watanabe A."/>
            <person name="Yamada M."/>
            <person name="Yasuda M."/>
            <person name="Sato S."/>
            <person name="de la Bastide M."/>
            <person name="Huang E."/>
            <person name="Spiegel L."/>
            <person name="Gnoj L."/>
            <person name="O'Shaughnessy A."/>
            <person name="Preston R."/>
            <person name="Habermann K."/>
            <person name="Murray J."/>
            <person name="Johnson D."/>
            <person name="Rohlfing T."/>
            <person name="Nelson J."/>
            <person name="Stoneking T."/>
            <person name="Pepin K."/>
            <person name="Spieth J."/>
            <person name="Sekhon M."/>
            <person name="Armstrong J."/>
            <person name="Becker M."/>
            <person name="Belter E."/>
            <person name="Cordum H."/>
            <person name="Cordes M."/>
            <person name="Courtney L."/>
            <person name="Courtney W."/>
            <person name="Dante M."/>
            <person name="Du H."/>
            <person name="Edwards J."/>
            <person name="Fryman J."/>
            <person name="Haakensen B."/>
            <person name="Lamar E."/>
            <person name="Latreille P."/>
            <person name="Leonard S."/>
            <person name="Meyer R."/>
            <person name="Mulvaney E."/>
            <person name="Ozersky P."/>
            <person name="Riley A."/>
            <person name="Strowmatt C."/>
            <person name="Wagner-McPherson C."/>
            <person name="Wollam A."/>
            <person name="Yoakum M."/>
            <person name="Bell M."/>
            <person name="Dedhia N."/>
            <person name="Parnell L."/>
            <person name="Shah R."/>
            <person name="Rodriguez M."/>
            <person name="Hoon See L."/>
            <person name="Vil D."/>
            <person name="Baker J."/>
            <person name="Kirchoff K."/>
            <person name="Toth K."/>
            <person name="King L."/>
            <person name="Bahret A."/>
            <person name="Miller B."/>
            <person name="Marra M.A."/>
            <person name="Martienssen R."/>
            <person name="McCombie W.R."/>
            <person name="Wilson R.K."/>
            <person name="Murphy G."/>
            <person name="Bancroft I."/>
            <person name="Volckaert G."/>
            <person name="Wambutt R."/>
            <person name="Duesterhoeft A."/>
            <person name="Stiekema W."/>
            <person name="Pohl T."/>
            <person name="Entian K.-D."/>
            <person name="Terryn N."/>
            <person name="Hartley N."/>
            <person name="Bent E."/>
            <person name="Johnson S."/>
            <person name="Langham S.-A."/>
            <person name="McCullagh B."/>
            <person name="Robben J."/>
            <person name="Grymonprez B."/>
            <person name="Zimmermann W."/>
            <person name="Ramsperger U."/>
            <person name="Wedler H."/>
            <person name="Balke K."/>
            <person name="Wedler E."/>
            <person name="Peters S."/>
            <person name="van Staveren M."/>
            <person name="Dirkse W."/>
            <person name="Mooijman P."/>
            <person name="Klein Lankhorst R."/>
            <person name="Weitzenegger T."/>
            <person name="Bothe G."/>
            <person name="Rose M."/>
            <person name="Hauf J."/>
            <person name="Berneiser S."/>
            <person name="Hempel S."/>
            <person name="Feldpausch M."/>
            <person name="Lamberth S."/>
            <person name="Villarroel R."/>
            <person name="Gielen J."/>
            <person name="Ardiles W."/>
            <person name="Bents O."/>
            <person name="Lemcke K."/>
            <person name="Kolesov G."/>
            <person name="Mayer K.F.X."/>
            <person name="Rudd S."/>
            <person name="Schoof H."/>
            <person name="Schueller C."/>
            <person name="Zaccaria P."/>
            <person name="Mewes H.-W."/>
            <person name="Bevan M."/>
            <person name="Fransz P.F."/>
        </authorList>
    </citation>
    <scope>NUCLEOTIDE SEQUENCE [LARGE SCALE GENOMIC DNA]</scope>
    <source>
        <strain>cv. Columbia</strain>
    </source>
</reference>
<reference key="2">
    <citation type="journal article" date="2017" name="Plant J.">
        <title>Araport11: a complete reannotation of the Arabidopsis thaliana reference genome.</title>
        <authorList>
            <person name="Cheng C.Y."/>
            <person name="Krishnakumar V."/>
            <person name="Chan A.P."/>
            <person name="Thibaud-Nissen F."/>
            <person name="Schobel S."/>
            <person name="Town C.D."/>
        </authorList>
    </citation>
    <scope>GENOME REANNOTATION</scope>
    <source>
        <strain>cv. Columbia</strain>
    </source>
</reference>
<reference key="3">
    <citation type="journal article" date="2003" name="Science">
        <title>Empirical analysis of transcriptional activity in the Arabidopsis genome.</title>
        <authorList>
            <person name="Yamada K."/>
            <person name="Lim J."/>
            <person name="Dale J.M."/>
            <person name="Chen H."/>
            <person name="Shinn P."/>
            <person name="Palm C.J."/>
            <person name="Southwick A.M."/>
            <person name="Wu H.C."/>
            <person name="Kim C.J."/>
            <person name="Nguyen M."/>
            <person name="Pham P.K."/>
            <person name="Cheuk R.F."/>
            <person name="Karlin-Newmann G."/>
            <person name="Liu S.X."/>
            <person name="Lam B."/>
            <person name="Sakano H."/>
            <person name="Wu T."/>
            <person name="Yu G."/>
            <person name="Miranda M."/>
            <person name="Quach H.L."/>
            <person name="Tripp M."/>
            <person name="Chang C.H."/>
            <person name="Lee J.M."/>
            <person name="Toriumi M.J."/>
            <person name="Chan M.M."/>
            <person name="Tang C.C."/>
            <person name="Onodera C.S."/>
            <person name="Deng J.M."/>
            <person name="Akiyama K."/>
            <person name="Ansari Y."/>
            <person name="Arakawa T."/>
            <person name="Banh J."/>
            <person name="Banno F."/>
            <person name="Bowser L."/>
            <person name="Brooks S.Y."/>
            <person name="Carninci P."/>
            <person name="Chao Q."/>
            <person name="Choy N."/>
            <person name="Enju A."/>
            <person name="Goldsmith A.D."/>
            <person name="Gurjal M."/>
            <person name="Hansen N.F."/>
            <person name="Hayashizaki Y."/>
            <person name="Johnson-Hopson C."/>
            <person name="Hsuan V.W."/>
            <person name="Iida K."/>
            <person name="Karnes M."/>
            <person name="Khan S."/>
            <person name="Koesema E."/>
            <person name="Ishida J."/>
            <person name="Jiang P.X."/>
            <person name="Jones T."/>
            <person name="Kawai J."/>
            <person name="Kamiya A."/>
            <person name="Meyers C."/>
            <person name="Nakajima M."/>
            <person name="Narusaka M."/>
            <person name="Seki M."/>
            <person name="Sakurai T."/>
            <person name="Satou M."/>
            <person name="Tamse R."/>
            <person name="Vaysberg M."/>
            <person name="Wallender E.K."/>
            <person name="Wong C."/>
            <person name="Yamamura Y."/>
            <person name="Yuan S."/>
            <person name="Shinozaki K."/>
            <person name="Davis R.W."/>
            <person name="Theologis A."/>
            <person name="Ecker J.R."/>
        </authorList>
    </citation>
    <scope>NUCLEOTIDE SEQUENCE [LARGE SCALE MRNA]</scope>
    <source>
        <strain>cv. Columbia</strain>
    </source>
</reference>
<reference key="4">
    <citation type="journal article" date="2007" name="Plant J.">
        <title>The TUMOROUS SHOOT DEVELOPMENT2 gene of Arabidopsis encoding a putative methyltransferase is required for cell adhesion and co-ordinated plant development.</title>
        <authorList>
            <person name="Krupkova E."/>
            <person name="Immerzeel P."/>
            <person name="Pauly M."/>
            <person name="Schmulling T."/>
        </authorList>
    </citation>
    <scope>GENE FAMILY</scope>
</reference>
<proteinExistence type="evidence at transcript level"/>
<comment type="subcellular location">
    <subcellularLocation>
        <location evidence="2">Golgi apparatus membrane</location>
        <topology evidence="2">Single-pass type II membrane protein</topology>
    </subcellularLocation>
</comment>
<comment type="similarity">
    <text evidence="2">Belongs to the methyltransferase superfamily.</text>
</comment>
<protein>
    <recommendedName>
        <fullName>Probable methyltransferase PMT7</fullName>
        <ecNumber>2.1.1.-</ecNumber>
    </recommendedName>
</protein>
<name>PMT7_ARATH</name>
<dbReference type="EC" id="2.1.1.-"/>
<dbReference type="EMBL" id="AL162873">
    <property type="protein sequence ID" value="CAB85526.1"/>
    <property type="molecule type" value="Genomic_DNA"/>
</dbReference>
<dbReference type="EMBL" id="CP002688">
    <property type="protein sequence ID" value="AED90692.1"/>
    <property type="molecule type" value="Genomic_DNA"/>
</dbReference>
<dbReference type="EMBL" id="AY072008">
    <property type="protein sequence ID" value="AAL57703.1"/>
    <property type="molecule type" value="mRNA"/>
</dbReference>
<dbReference type="PIR" id="T48433">
    <property type="entry name" value="T48433"/>
</dbReference>
<dbReference type="RefSeq" id="NP_196026.1">
    <property type="nucleotide sequence ID" value="NM_120488.4"/>
</dbReference>
<dbReference type="FunCoup" id="Q9LZA4">
    <property type="interactions" value="1708"/>
</dbReference>
<dbReference type="STRING" id="3702.Q9LZA4"/>
<dbReference type="GlyGen" id="Q9LZA4">
    <property type="glycosylation" value="9 sites"/>
</dbReference>
<dbReference type="PaxDb" id="3702-AT5G04060.1"/>
<dbReference type="ProteomicsDB" id="226152"/>
<dbReference type="EnsemblPlants" id="AT5G04060.1">
    <property type="protein sequence ID" value="AT5G04060.1"/>
    <property type="gene ID" value="AT5G04060"/>
</dbReference>
<dbReference type="GeneID" id="830285"/>
<dbReference type="Gramene" id="AT5G04060.1">
    <property type="protein sequence ID" value="AT5G04060.1"/>
    <property type="gene ID" value="AT5G04060"/>
</dbReference>
<dbReference type="KEGG" id="ath:AT5G04060"/>
<dbReference type="Araport" id="AT5G04060"/>
<dbReference type="TAIR" id="AT5G04060"/>
<dbReference type="eggNOG" id="ENOG502QTJJ">
    <property type="taxonomic scope" value="Eukaryota"/>
</dbReference>
<dbReference type="HOGENOM" id="CLU_010485_2_3_1"/>
<dbReference type="InParanoid" id="Q9LZA4"/>
<dbReference type="OMA" id="AMSSYPV"/>
<dbReference type="PhylomeDB" id="Q9LZA4"/>
<dbReference type="PRO" id="PR:Q9LZA4"/>
<dbReference type="Proteomes" id="UP000006548">
    <property type="component" value="Chromosome 5"/>
</dbReference>
<dbReference type="ExpressionAtlas" id="Q9LZA4">
    <property type="expression patterns" value="baseline and differential"/>
</dbReference>
<dbReference type="GO" id="GO:0005768">
    <property type="term" value="C:endosome"/>
    <property type="evidence" value="ECO:0007005"/>
    <property type="project" value="TAIR"/>
</dbReference>
<dbReference type="GO" id="GO:0005794">
    <property type="term" value="C:Golgi apparatus"/>
    <property type="evidence" value="ECO:0007005"/>
    <property type="project" value="TAIR"/>
</dbReference>
<dbReference type="GO" id="GO:0000139">
    <property type="term" value="C:Golgi membrane"/>
    <property type="evidence" value="ECO:0007669"/>
    <property type="project" value="UniProtKB-SubCell"/>
</dbReference>
<dbReference type="GO" id="GO:0005802">
    <property type="term" value="C:trans-Golgi network"/>
    <property type="evidence" value="ECO:0007005"/>
    <property type="project" value="TAIR"/>
</dbReference>
<dbReference type="GO" id="GO:0008168">
    <property type="term" value="F:methyltransferase activity"/>
    <property type="evidence" value="ECO:0007669"/>
    <property type="project" value="UniProtKB-KW"/>
</dbReference>
<dbReference type="GO" id="GO:0032259">
    <property type="term" value="P:methylation"/>
    <property type="evidence" value="ECO:0007669"/>
    <property type="project" value="UniProtKB-KW"/>
</dbReference>
<dbReference type="CDD" id="cd02440">
    <property type="entry name" value="AdoMet_MTases"/>
    <property type="match status" value="1"/>
</dbReference>
<dbReference type="FunFam" id="3.40.50.150:FF:000170">
    <property type="entry name" value="Probable methyltransferase PMT6"/>
    <property type="match status" value="1"/>
</dbReference>
<dbReference type="Gene3D" id="3.40.50.150">
    <property type="entry name" value="Vaccinia Virus protein VP39"/>
    <property type="match status" value="1"/>
</dbReference>
<dbReference type="InterPro" id="IPR004159">
    <property type="entry name" value="Put_SAM_MeTrfase"/>
</dbReference>
<dbReference type="InterPro" id="IPR029063">
    <property type="entry name" value="SAM-dependent_MTases_sf"/>
</dbReference>
<dbReference type="PANTHER" id="PTHR10108:SF1168">
    <property type="entry name" value="METHYLTRANSFERASE PMT7-RELATED"/>
    <property type="match status" value="1"/>
</dbReference>
<dbReference type="PANTHER" id="PTHR10108">
    <property type="entry name" value="SAM-DEPENDENT METHYLTRANSFERASE"/>
    <property type="match status" value="1"/>
</dbReference>
<dbReference type="Pfam" id="PF03141">
    <property type="entry name" value="Methyltransf_29"/>
    <property type="match status" value="1"/>
</dbReference>
<dbReference type="SUPFAM" id="SSF53335">
    <property type="entry name" value="S-adenosyl-L-methionine-dependent methyltransferases"/>
    <property type="match status" value="2"/>
</dbReference>
<keyword id="KW-0325">Glycoprotein</keyword>
<keyword id="KW-0333">Golgi apparatus</keyword>
<keyword id="KW-0472">Membrane</keyword>
<keyword id="KW-0489">Methyltransferase</keyword>
<keyword id="KW-1185">Reference proteome</keyword>
<keyword id="KW-0735">Signal-anchor</keyword>
<keyword id="KW-0808">Transferase</keyword>
<keyword id="KW-0812">Transmembrane</keyword>
<keyword id="KW-1133">Transmembrane helix</keyword>
<gene>
    <name type="ordered locus">At5g04060</name>
    <name type="ORF">F21E1.1</name>
    <name type="ORF">F8F6.270</name>
</gene>
<evidence type="ECO:0000255" key="1"/>
<evidence type="ECO:0000305" key="2"/>
<sequence length="600" mass="68357">MGGGYVLFGSARSGQMIMVALVLMVGSFYAGSIFGNNSPIYISQPSSSNSSSSSPSQSGPSNFANKIELTYRRTSVSIPESGVNVCPLKFNEYIPCHNVTYVQQLLPSLNLSRREELERHCPPLEQRLFCLVPPPKDYKIPIRWPTSRDYVWRSNVNHTHLAEVKGGQNWVHEQGQLWWFPGGGTHFKHGAPEYIQRLGNMTTNETGDLLSAGVEQVLDVGCGVASFAAYLLPLGIKTMSFAPKDGHENQIQFALERGIRAMISAIATKQMPYPAASFDMVHCSRCRVDWHENDGVLMKEVNRLLRPNGYFVYSAPPAYRKDKDFPVIWDKLVNLTSAMCWKLISRKVQTAIWVKEDDEACLRKNAELELITICGVEDVSKASWKVPLRDCVDISENRQQKPSSLTDRLSSYPTSLREKGISEDEFTLDTNFWREQVNQYWELMNVNKTEVRNVMDTNAFIGGFAAAMNSYPLWVMNVVPATMNDTLSGIYQRGLTGAYHDWCEPFSTYPRTYDLLHADHLFTHYKIYGEGCLLEDIMLEMDRIIRPQGFIIIRDEESIVSRVRDLAPKFLWEVEAHELQDKYKKTETVLFCRKKFWAIL</sequence>